<protein>
    <recommendedName>
        <fullName evidence="1">Holo-[acyl-carrier-protein] synthase</fullName>
        <shortName evidence="1">Holo-ACP synthase</shortName>
        <ecNumber evidence="1">2.7.8.7</ecNumber>
    </recommendedName>
    <alternativeName>
        <fullName evidence="1">4'-phosphopantetheinyl transferase AcpS</fullName>
    </alternativeName>
</protein>
<name>ACPS_DESDA</name>
<accession>B8IZX1</accession>
<reference key="1">
    <citation type="submission" date="2009-01" db="EMBL/GenBank/DDBJ databases">
        <title>Complete sequence of Desulfovibrio desulfuricans subsp. desulfuricans str. ATCC 27774.</title>
        <authorList>
            <consortium name="US DOE Joint Genome Institute"/>
            <person name="Lucas S."/>
            <person name="Copeland A."/>
            <person name="Lapidus A."/>
            <person name="Glavina del Rio T."/>
            <person name="Tice H."/>
            <person name="Bruce D."/>
            <person name="Goodwin L."/>
            <person name="Pitluck S."/>
            <person name="Sims D."/>
            <person name="Lu M."/>
            <person name="Kiss H."/>
            <person name="Meineke L."/>
            <person name="Brettin T."/>
            <person name="Detter J.C."/>
            <person name="Han C."/>
            <person name="Larimer F."/>
            <person name="Land M."/>
            <person name="Hauser L."/>
            <person name="Kyrpides N."/>
            <person name="Ovchinnikova G."/>
            <person name="Hazen T.C."/>
        </authorList>
    </citation>
    <scope>NUCLEOTIDE SEQUENCE [LARGE SCALE GENOMIC DNA]</scope>
    <source>
        <strain>ATCC 27774 / DSM 6949 / MB</strain>
    </source>
</reference>
<dbReference type="EC" id="2.7.8.7" evidence="1"/>
<dbReference type="EMBL" id="CP001358">
    <property type="protein sequence ID" value="ACL49048.1"/>
    <property type="molecule type" value="Genomic_DNA"/>
</dbReference>
<dbReference type="SMR" id="B8IZX1"/>
<dbReference type="STRING" id="525146.Ddes_1144"/>
<dbReference type="KEGG" id="dds:Ddes_1144"/>
<dbReference type="eggNOG" id="COG0736">
    <property type="taxonomic scope" value="Bacteria"/>
</dbReference>
<dbReference type="HOGENOM" id="CLU_089696_0_2_7"/>
<dbReference type="GO" id="GO:0005737">
    <property type="term" value="C:cytoplasm"/>
    <property type="evidence" value="ECO:0007669"/>
    <property type="project" value="UniProtKB-SubCell"/>
</dbReference>
<dbReference type="GO" id="GO:0008897">
    <property type="term" value="F:holo-[acyl-carrier-protein] synthase activity"/>
    <property type="evidence" value="ECO:0007669"/>
    <property type="project" value="UniProtKB-UniRule"/>
</dbReference>
<dbReference type="GO" id="GO:0000287">
    <property type="term" value="F:magnesium ion binding"/>
    <property type="evidence" value="ECO:0007669"/>
    <property type="project" value="UniProtKB-UniRule"/>
</dbReference>
<dbReference type="GO" id="GO:0006633">
    <property type="term" value="P:fatty acid biosynthetic process"/>
    <property type="evidence" value="ECO:0007669"/>
    <property type="project" value="UniProtKB-UniRule"/>
</dbReference>
<dbReference type="Gene3D" id="3.90.470.20">
    <property type="entry name" value="4'-phosphopantetheinyl transferase domain"/>
    <property type="match status" value="1"/>
</dbReference>
<dbReference type="HAMAP" id="MF_00101">
    <property type="entry name" value="AcpS"/>
    <property type="match status" value="1"/>
</dbReference>
<dbReference type="InterPro" id="IPR008278">
    <property type="entry name" value="4-PPantetheinyl_Trfase_dom"/>
</dbReference>
<dbReference type="InterPro" id="IPR037143">
    <property type="entry name" value="4-PPantetheinyl_Trfase_dom_sf"/>
</dbReference>
<dbReference type="InterPro" id="IPR002582">
    <property type="entry name" value="ACPS"/>
</dbReference>
<dbReference type="InterPro" id="IPR004568">
    <property type="entry name" value="Ppantetheine-prot_Trfase_dom"/>
</dbReference>
<dbReference type="NCBIfam" id="TIGR00516">
    <property type="entry name" value="acpS"/>
    <property type="match status" value="1"/>
</dbReference>
<dbReference type="NCBIfam" id="TIGR00556">
    <property type="entry name" value="pantethn_trn"/>
    <property type="match status" value="1"/>
</dbReference>
<dbReference type="NCBIfam" id="NF011251">
    <property type="entry name" value="PRK14657.1"/>
    <property type="match status" value="1"/>
</dbReference>
<dbReference type="Pfam" id="PF01648">
    <property type="entry name" value="ACPS"/>
    <property type="match status" value="1"/>
</dbReference>
<dbReference type="SUPFAM" id="SSF56214">
    <property type="entry name" value="4'-phosphopantetheinyl transferase"/>
    <property type="match status" value="1"/>
</dbReference>
<feature type="chain" id="PRO_1000118805" description="Holo-[acyl-carrier-protein] synthase">
    <location>
        <begin position="1"/>
        <end position="124"/>
    </location>
</feature>
<feature type="binding site" evidence="1">
    <location>
        <position position="8"/>
    </location>
    <ligand>
        <name>Mg(2+)</name>
        <dbReference type="ChEBI" id="CHEBI:18420"/>
    </ligand>
</feature>
<feature type="binding site" evidence="1">
    <location>
        <position position="55"/>
    </location>
    <ligand>
        <name>Mg(2+)</name>
        <dbReference type="ChEBI" id="CHEBI:18420"/>
    </ligand>
</feature>
<organism>
    <name type="scientific">Desulfovibrio desulfuricans (strain ATCC 27774 / DSM 6949 / MB)</name>
    <dbReference type="NCBI Taxonomy" id="525146"/>
    <lineage>
        <taxon>Bacteria</taxon>
        <taxon>Pseudomonadati</taxon>
        <taxon>Thermodesulfobacteriota</taxon>
        <taxon>Desulfovibrionia</taxon>
        <taxon>Desulfovibrionales</taxon>
        <taxon>Desulfovibrionaceae</taxon>
        <taxon>Desulfovibrio</taxon>
    </lineage>
</organism>
<comment type="function">
    <text evidence="1">Transfers the 4'-phosphopantetheine moiety from coenzyme A to a Ser of acyl-carrier-protein.</text>
</comment>
<comment type="catalytic activity">
    <reaction evidence="1">
        <text>apo-[ACP] + CoA = holo-[ACP] + adenosine 3',5'-bisphosphate + H(+)</text>
        <dbReference type="Rhea" id="RHEA:12068"/>
        <dbReference type="Rhea" id="RHEA-COMP:9685"/>
        <dbReference type="Rhea" id="RHEA-COMP:9690"/>
        <dbReference type="ChEBI" id="CHEBI:15378"/>
        <dbReference type="ChEBI" id="CHEBI:29999"/>
        <dbReference type="ChEBI" id="CHEBI:57287"/>
        <dbReference type="ChEBI" id="CHEBI:58343"/>
        <dbReference type="ChEBI" id="CHEBI:64479"/>
        <dbReference type="EC" id="2.7.8.7"/>
    </reaction>
</comment>
<comment type="cofactor">
    <cofactor evidence="1">
        <name>Mg(2+)</name>
        <dbReference type="ChEBI" id="CHEBI:18420"/>
    </cofactor>
</comment>
<comment type="subcellular location">
    <subcellularLocation>
        <location evidence="1">Cytoplasm</location>
    </subcellularLocation>
</comment>
<comment type="similarity">
    <text evidence="1">Belongs to the P-Pant transferase superfamily. AcpS family.</text>
</comment>
<sequence length="124" mass="12988">MIVGLGVDIVELARIEKSLTRFGRRFAEKVLSPEEMAAMPTLTVNYIAGRFAVKEAAVKALGTGFSQGIGPTLVETVATSGGKPQLRLHGAALQCARDLGVTSCHVSISHDRSSAVAVVVLEAL</sequence>
<proteinExistence type="inferred from homology"/>
<gene>
    <name evidence="1" type="primary">acpS</name>
    <name type="ordered locus">Ddes_1144</name>
</gene>
<keyword id="KW-0963">Cytoplasm</keyword>
<keyword id="KW-0275">Fatty acid biosynthesis</keyword>
<keyword id="KW-0276">Fatty acid metabolism</keyword>
<keyword id="KW-0444">Lipid biosynthesis</keyword>
<keyword id="KW-0443">Lipid metabolism</keyword>
<keyword id="KW-0460">Magnesium</keyword>
<keyword id="KW-0479">Metal-binding</keyword>
<keyword id="KW-0808">Transferase</keyword>
<evidence type="ECO:0000255" key="1">
    <source>
        <dbReference type="HAMAP-Rule" id="MF_00101"/>
    </source>
</evidence>